<protein>
    <recommendedName>
        <fullName evidence="7">Thylakoid lumenal 17.4 kDa protein, chloroplastic</fullName>
    </recommendedName>
    <alternativeName>
        <fullName evidence="7">P17.4</fullName>
    </alternativeName>
</protein>
<accession>P81760</accession>
<accession>Q3E8C0</accession>
<accession>Q93Y82</accession>
<feature type="transit peptide" description="Chloroplast" evidence="1">
    <location>
        <begin position="1"/>
        <end status="unknown"/>
    </location>
</feature>
<feature type="transit peptide" description="Thylakoid" evidence="2 3">
    <location>
        <begin status="unknown"/>
        <end position="77"/>
    </location>
</feature>
<feature type="chain" id="PRO_0000023524" description="Thylakoid lumenal 17.4 kDa protein, chloroplastic">
    <location>
        <begin position="78"/>
        <end position="236"/>
    </location>
</feature>
<feature type="domain" description="Pentapeptide repeat 1">
    <location>
        <begin position="124"/>
        <end position="163"/>
    </location>
</feature>
<feature type="domain" description="Pentapeptide repeat 2">
    <location>
        <begin position="169"/>
        <end position="208"/>
    </location>
</feature>
<feature type="splice variant" id="VSP_034389" description="In isoform 2." evidence="8">
    <location>
        <position position="36"/>
    </location>
</feature>
<feature type="sequence conflict" description="In Ref. 1." evidence="8" ref="1">
    <original>N</original>
    <variation>K</variation>
    <location>
        <position position="21"/>
    </location>
</feature>
<keyword id="KW-0025">Alternative splicing</keyword>
<keyword id="KW-0150">Chloroplast</keyword>
<keyword id="KW-0903">Direct protein sequencing</keyword>
<keyword id="KW-0934">Plastid</keyword>
<keyword id="KW-1185">Reference proteome</keyword>
<keyword id="KW-0677">Repeat</keyword>
<keyword id="KW-0793">Thylakoid</keyword>
<keyword id="KW-0809">Transit peptide</keyword>
<comment type="subunit">
    <text evidence="5">Interacts in vitro with LTO1.</text>
</comment>
<comment type="interaction">
    <interactant intactId="EBI-449573">
        <id>P81760</id>
    </interactant>
    <interactant intactId="EBI-368542">
        <id>P0AA25</id>
        <label>trxA</label>
    </interactant>
    <organismsDiffer>true</organismsDiffer>
    <experiments>2</experiments>
</comment>
<comment type="subcellular location">
    <subcellularLocation>
        <location evidence="2 4">Plastid</location>
        <location evidence="2 4">Chloroplast thylakoid lumen</location>
    </subcellularLocation>
</comment>
<comment type="alternative products">
    <event type="alternative splicing"/>
    <isoform>
        <id>P81760-1</id>
        <name>1</name>
        <sequence type="displayed"/>
    </isoform>
    <isoform>
        <id>P81760-2</id>
        <name>2</name>
        <sequence type="described" ref="VSP_034389"/>
    </isoform>
</comment>
<evidence type="ECO:0000255" key="1"/>
<evidence type="ECO:0000269" key="2">
    <source>
    </source>
</evidence>
<evidence type="ECO:0000269" key="3">
    <source>
    </source>
</evidence>
<evidence type="ECO:0000269" key="4">
    <source>
    </source>
</evidence>
<evidence type="ECO:0000269" key="5">
    <source>
    </source>
</evidence>
<evidence type="ECO:0000303" key="6">
    <source>
    </source>
</evidence>
<evidence type="ECO:0000303" key="7">
    <source>
    </source>
</evidence>
<evidence type="ECO:0000305" key="8"/>
<evidence type="ECO:0000312" key="9">
    <source>
        <dbReference type="Araport" id="AT5G53490"/>
    </source>
</evidence>
<evidence type="ECO:0000312" key="10">
    <source>
        <dbReference type="EMBL" id="BAB09725.1"/>
    </source>
</evidence>
<name>TL17_ARATH</name>
<reference key="1">
    <citation type="journal article" date="1998" name="FEBS Lett.">
        <title>Characterisation of an Arabidopsis cDNA encoding a thylakoid lumen protein related to a novel 'pentapeptide repeat' family of proteins.</title>
        <authorList>
            <person name="Kieselbach T."/>
            <person name="Mant A."/>
            <person name="Robinson C."/>
            <person name="Schroeder W.P."/>
        </authorList>
    </citation>
    <scope>NUCLEOTIDE SEQUENCE [MRNA] (ISOFORM 1)</scope>
</reference>
<reference key="2">
    <citation type="journal article" date="1998" name="DNA Res.">
        <title>Structural analysis of Arabidopsis thaliana chromosome 5. VII. Sequence features of the regions of 1,013,767 bp covered by sixteen physically assigned P1 and TAC clones.</title>
        <authorList>
            <person name="Nakamura Y."/>
            <person name="Sato S."/>
            <person name="Asamizu E."/>
            <person name="Kaneko T."/>
            <person name="Kotani H."/>
            <person name="Miyajima N."/>
            <person name="Tabata S."/>
        </authorList>
    </citation>
    <scope>NUCLEOTIDE SEQUENCE [LARGE SCALE GENOMIC DNA]</scope>
    <source>
        <strain>cv. Columbia</strain>
    </source>
</reference>
<reference key="3">
    <citation type="journal article" date="2017" name="Plant J.">
        <title>Araport11: a complete reannotation of the Arabidopsis thaliana reference genome.</title>
        <authorList>
            <person name="Cheng C.Y."/>
            <person name="Krishnakumar V."/>
            <person name="Chan A.P."/>
            <person name="Thibaud-Nissen F."/>
            <person name="Schobel S."/>
            <person name="Town C.D."/>
        </authorList>
    </citation>
    <scope>GENOME REANNOTATION</scope>
    <source>
        <strain>cv. Columbia</strain>
    </source>
</reference>
<reference key="4">
    <citation type="journal article" date="2003" name="Science">
        <title>Empirical analysis of transcriptional activity in the Arabidopsis genome.</title>
        <authorList>
            <person name="Yamada K."/>
            <person name="Lim J."/>
            <person name="Dale J.M."/>
            <person name="Chen H."/>
            <person name="Shinn P."/>
            <person name="Palm C.J."/>
            <person name="Southwick A.M."/>
            <person name="Wu H.C."/>
            <person name="Kim C.J."/>
            <person name="Nguyen M."/>
            <person name="Pham P.K."/>
            <person name="Cheuk R.F."/>
            <person name="Karlin-Newmann G."/>
            <person name="Liu S.X."/>
            <person name="Lam B."/>
            <person name="Sakano H."/>
            <person name="Wu T."/>
            <person name="Yu G."/>
            <person name="Miranda M."/>
            <person name="Quach H.L."/>
            <person name="Tripp M."/>
            <person name="Chang C.H."/>
            <person name="Lee J.M."/>
            <person name="Toriumi M.J."/>
            <person name="Chan M.M."/>
            <person name="Tang C.C."/>
            <person name="Onodera C.S."/>
            <person name="Deng J.M."/>
            <person name="Akiyama K."/>
            <person name="Ansari Y."/>
            <person name="Arakawa T."/>
            <person name="Banh J."/>
            <person name="Banno F."/>
            <person name="Bowser L."/>
            <person name="Brooks S.Y."/>
            <person name="Carninci P."/>
            <person name="Chao Q."/>
            <person name="Choy N."/>
            <person name="Enju A."/>
            <person name="Goldsmith A.D."/>
            <person name="Gurjal M."/>
            <person name="Hansen N.F."/>
            <person name="Hayashizaki Y."/>
            <person name="Johnson-Hopson C."/>
            <person name="Hsuan V.W."/>
            <person name="Iida K."/>
            <person name="Karnes M."/>
            <person name="Khan S."/>
            <person name="Koesema E."/>
            <person name="Ishida J."/>
            <person name="Jiang P.X."/>
            <person name="Jones T."/>
            <person name="Kawai J."/>
            <person name="Kamiya A."/>
            <person name="Meyers C."/>
            <person name="Nakajima M."/>
            <person name="Narusaka M."/>
            <person name="Seki M."/>
            <person name="Sakurai T."/>
            <person name="Satou M."/>
            <person name="Tamse R."/>
            <person name="Vaysberg M."/>
            <person name="Wallender E.K."/>
            <person name="Wong C."/>
            <person name="Yamamura Y."/>
            <person name="Yuan S."/>
            <person name="Shinozaki K."/>
            <person name="Davis R.W."/>
            <person name="Theologis A."/>
            <person name="Ecker J.R."/>
        </authorList>
    </citation>
    <scope>NUCLEOTIDE SEQUENCE [LARGE SCALE MRNA] (ISOFORM 1)</scope>
    <source>
        <strain>cv. Columbia</strain>
    </source>
</reference>
<reference key="5">
    <citation type="journal article" date="2002" name="J. Biol. Chem.">
        <title>Proteome map of the chloroplast lumen of Arabidopsis thaliana.</title>
        <authorList>
            <person name="Schubert M."/>
            <person name="Petersson U.A."/>
            <person name="Haas B.J."/>
            <person name="Funk C."/>
            <person name="Schroeder W.P."/>
            <person name="Kieselbach T."/>
        </authorList>
    </citation>
    <scope>PROTEIN SEQUENCE OF 78-91</scope>
    <scope>SUBCELLULAR LOCATION</scope>
</reference>
<reference key="6">
    <citation type="journal article" date="2002" name="Plant Cell">
        <title>Central functions of the lumenal and peripheral thylakoid proteome of Arabidopsis determined by experimentation and genome-wide prediction.</title>
        <authorList>
            <person name="Peltier J.-B."/>
            <person name="Emanuelsson O."/>
            <person name="Kalume D.E."/>
            <person name="Ytterberg J."/>
            <person name="Friso G."/>
            <person name="Rudella A."/>
            <person name="Liberles D.A."/>
            <person name="Soederberg L."/>
            <person name="Roepstorff P."/>
            <person name="von Heijne G."/>
            <person name="van Wijk K.J."/>
        </authorList>
    </citation>
    <scope>PROTEIN SEQUENCE OF N-TERMINUS</scope>
    <scope>IDENTIFICATION BY MASS SPECTROMETRY</scope>
</reference>
<reference key="7">
    <citation type="journal article" date="2008" name="PLoS ONE">
        <title>Sorting signals, N-terminal modifications and abundance of the chloroplast proteome.</title>
        <authorList>
            <person name="Zybailov B."/>
            <person name="Rutschow H."/>
            <person name="Friso G."/>
            <person name="Rudella A."/>
            <person name="Emanuelsson O."/>
            <person name="Sun Q."/>
            <person name="van Wijk K.J."/>
        </authorList>
    </citation>
    <scope>IDENTIFICATION BY MASS SPECTROMETRY</scope>
    <scope>SUBCELLULAR LOCATION [LARGE SCALE ANALYSIS]</scope>
</reference>
<reference key="8">
    <citation type="journal article" date="2014" name="Protein Pept. Lett.">
        <title>Identification of potential targets for thylakoid oxidoreductase AtVKOR/LTO1 in chloroplasts.</title>
        <authorList>
            <person name="Lu Y."/>
            <person name="Du J.J."/>
            <person name="Yu Z.B."/>
            <person name="Peng J.J."/>
            <person name="Xu J.N."/>
            <person name="Wang X.Y."/>
        </authorList>
    </citation>
    <scope>INTERACTION WITH LTO1</scope>
</reference>
<sequence>MASLPVQFTRNQISSPFFSVNLRREPRSLVTVHCSAGENRENGEGVKKSLFPLKELGSIACAALCACTLTIASPVIAANQRLPPLSTEPDRCEKAFVGNTIGQANGVYDKPLDLRFCDYTNDQTNLKGKTLSAALMVGAKFDGADMTEVVMSKAYAVEASFKGVNFTNAVIDRVNFGKSNLKGAVFRNTVLSGSTFEEANLEDVVFEDTIIGYIDLQKICRNESINEEGRLVLGCR</sequence>
<dbReference type="EMBL" id="AB015476">
    <property type="protein sequence ID" value="BAB09725.1"/>
    <property type="molecule type" value="Genomic_DNA"/>
</dbReference>
<dbReference type="EMBL" id="CP002688">
    <property type="protein sequence ID" value="AED96367.1"/>
    <property type="molecule type" value="Genomic_DNA"/>
</dbReference>
<dbReference type="EMBL" id="CP002688">
    <property type="protein sequence ID" value="AED96368.1"/>
    <property type="molecule type" value="Genomic_DNA"/>
</dbReference>
<dbReference type="EMBL" id="AF370552">
    <property type="protein sequence ID" value="AAK48979.1"/>
    <property type="molecule type" value="mRNA"/>
</dbReference>
<dbReference type="EMBL" id="BT003410">
    <property type="protein sequence ID" value="AAO30073.1"/>
    <property type="molecule type" value="mRNA"/>
</dbReference>
<dbReference type="RefSeq" id="NP_200161.2">
    <molecule id="P81760-2"/>
    <property type="nucleotide sequence ID" value="NM_124729.4"/>
</dbReference>
<dbReference type="RefSeq" id="NP_851183.1">
    <molecule id="P81760-1"/>
    <property type="nucleotide sequence ID" value="NM_180852.3"/>
</dbReference>
<dbReference type="SMR" id="P81760"/>
<dbReference type="BioGRID" id="20675">
    <property type="interactions" value="1"/>
</dbReference>
<dbReference type="FunCoup" id="P81760">
    <property type="interactions" value="1522"/>
</dbReference>
<dbReference type="IntAct" id="P81760">
    <property type="interactions" value="2"/>
</dbReference>
<dbReference type="STRING" id="3702.P81760"/>
<dbReference type="iPTMnet" id="P81760"/>
<dbReference type="MetOSite" id="P81760"/>
<dbReference type="PaxDb" id="3702-AT5G53490.3"/>
<dbReference type="EnsemblPlants" id="AT5G53490.1">
    <molecule id="P81760-1"/>
    <property type="protein sequence ID" value="AT5G53490.1"/>
    <property type="gene ID" value="AT5G53490"/>
</dbReference>
<dbReference type="EnsemblPlants" id="AT5G53490.2">
    <molecule id="P81760-2"/>
    <property type="protein sequence ID" value="AT5G53490.2"/>
    <property type="gene ID" value="AT5G53490"/>
</dbReference>
<dbReference type="GeneID" id="835431"/>
<dbReference type="Gramene" id="AT5G53490.1">
    <molecule id="P81760-1"/>
    <property type="protein sequence ID" value="AT5G53490.1"/>
    <property type="gene ID" value="AT5G53490"/>
</dbReference>
<dbReference type="Gramene" id="AT5G53490.2">
    <molecule id="P81760-2"/>
    <property type="protein sequence ID" value="AT5G53490.2"/>
    <property type="gene ID" value="AT5G53490"/>
</dbReference>
<dbReference type="KEGG" id="ath:AT5G53490"/>
<dbReference type="Araport" id="AT5G53490"/>
<dbReference type="TAIR" id="AT5G53490">
    <property type="gene designation" value="TL17"/>
</dbReference>
<dbReference type="eggNOG" id="ENOG502QTR1">
    <property type="taxonomic scope" value="Eukaryota"/>
</dbReference>
<dbReference type="HOGENOM" id="CLU_066336_0_0_1"/>
<dbReference type="InParanoid" id="P81760"/>
<dbReference type="PhylomeDB" id="P81760"/>
<dbReference type="PRO" id="PR:P81760"/>
<dbReference type="Proteomes" id="UP000006548">
    <property type="component" value="Chromosome 5"/>
</dbReference>
<dbReference type="ExpressionAtlas" id="P81760">
    <property type="expression patterns" value="baseline and differential"/>
</dbReference>
<dbReference type="GO" id="GO:0009543">
    <property type="term" value="C:chloroplast thylakoid lumen"/>
    <property type="evidence" value="ECO:0007669"/>
    <property type="project" value="UniProtKB-SubCell"/>
</dbReference>
<dbReference type="Gene3D" id="2.160.20.80">
    <property type="entry name" value="E3 ubiquitin-protein ligase SopA"/>
    <property type="match status" value="1"/>
</dbReference>
<dbReference type="InterPro" id="IPR001646">
    <property type="entry name" value="5peptide_repeat"/>
</dbReference>
<dbReference type="PANTHER" id="PTHR47485">
    <property type="entry name" value="THYLAKOID LUMENAL 17.4 KDA PROTEIN, CHLOROPLASTIC"/>
    <property type="match status" value="1"/>
</dbReference>
<dbReference type="PANTHER" id="PTHR47485:SF1">
    <property type="entry name" value="THYLAKOID LUMENAL 17.4 KDA PROTEIN, CHLOROPLASTIC"/>
    <property type="match status" value="1"/>
</dbReference>
<dbReference type="Pfam" id="PF00805">
    <property type="entry name" value="Pentapeptide"/>
    <property type="match status" value="2"/>
</dbReference>
<dbReference type="SUPFAM" id="SSF141571">
    <property type="entry name" value="Pentapeptide repeat-like"/>
    <property type="match status" value="1"/>
</dbReference>
<organism>
    <name type="scientific">Arabidopsis thaliana</name>
    <name type="common">Mouse-ear cress</name>
    <dbReference type="NCBI Taxonomy" id="3702"/>
    <lineage>
        <taxon>Eukaryota</taxon>
        <taxon>Viridiplantae</taxon>
        <taxon>Streptophyta</taxon>
        <taxon>Embryophyta</taxon>
        <taxon>Tracheophyta</taxon>
        <taxon>Spermatophyta</taxon>
        <taxon>Magnoliopsida</taxon>
        <taxon>eudicotyledons</taxon>
        <taxon>Gunneridae</taxon>
        <taxon>Pentapetalae</taxon>
        <taxon>rosids</taxon>
        <taxon>malvids</taxon>
        <taxon>Brassicales</taxon>
        <taxon>Brassicaceae</taxon>
        <taxon>Camelineae</taxon>
        <taxon>Arabidopsis</taxon>
    </lineage>
</organism>
<gene>
    <name evidence="6" type="primary">TL17</name>
    <name evidence="9" type="ordered locus">At5g53490</name>
    <name evidence="10" type="ORF">MNC6.3</name>
</gene>
<proteinExistence type="evidence at protein level"/>